<proteinExistence type="inferred from homology"/>
<reference key="1">
    <citation type="journal article" date="2006" name="J. Bacteriol.">
        <title>Complete genome sequence of the dehalorespiring bacterium Desulfitobacterium hafniense Y51 and comparison with Dehalococcoides ethenogenes 195.</title>
        <authorList>
            <person name="Nonaka H."/>
            <person name="Keresztes G."/>
            <person name="Shinoda Y."/>
            <person name="Ikenaga Y."/>
            <person name="Abe M."/>
            <person name="Naito K."/>
            <person name="Inatomi K."/>
            <person name="Furukawa K."/>
            <person name="Inui M."/>
            <person name="Yukawa H."/>
        </authorList>
    </citation>
    <scope>NUCLEOTIDE SEQUENCE [LARGE SCALE GENOMIC DNA]</scope>
    <source>
        <strain>Y51</strain>
    </source>
</reference>
<accession>Q24M99</accession>
<organism>
    <name type="scientific">Desulfitobacterium hafniense (strain Y51)</name>
    <dbReference type="NCBI Taxonomy" id="138119"/>
    <lineage>
        <taxon>Bacteria</taxon>
        <taxon>Bacillati</taxon>
        <taxon>Bacillota</taxon>
        <taxon>Clostridia</taxon>
        <taxon>Eubacteriales</taxon>
        <taxon>Desulfitobacteriaceae</taxon>
        <taxon>Desulfitobacterium</taxon>
    </lineage>
</organism>
<gene>
    <name evidence="1" type="primary">mnmG</name>
    <name evidence="1" type="synonym">gidA</name>
    <name type="ordered locus">DSY5054</name>
</gene>
<name>MNMG_DESHY</name>
<evidence type="ECO:0000255" key="1">
    <source>
        <dbReference type="HAMAP-Rule" id="MF_00129"/>
    </source>
</evidence>
<comment type="function">
    <text evidence="1">NAD-binding protein involved in the addition of a carboxymethylaminomethyl (cmnm) group at the wobble position (U34) of certain tRNAs, forming tRNA-cmnm(5)s(2)U34.</text>
</comment>
<comment type="cofactor">
    <cofactor evidence="1">
        <name>FAD</name>
        <dbReference type="ChEBI" id="CHEBI:57692"/>
    </cofactor>
</comment>
<comment type="subunit">
    <text evidence="1">Homodimer. Heterotetramer of two MnmE and two MnmG subunits.</text>
</comment>
<comment type="subcellular location">
    <subcellularLocation>
        <location evidence="1">Cytoplasm</location>
    </subcellularLocation>
</comment>
<comment type="similarity">
    <text evidence="1">Belongs to the MnmG family.</text>
</comment>
<dbReference type="EMBL" id="AP008230">
    <property type="protein sequence ID" value="BAE86843.1"/>
    <property type="molecule type" value="Genomic_DNA"/>
</dbReference>
<dbReference type="RefSeq" id="WP_011462329.1">
    <property type="nucleotide sequence ID" value="NC_007907.1"/>
</dbReference>
<dbReference type="SMR" id="Q24M99"/>
<dbReference type="STRING" id="138119.DSY5054"/>
<dbReference type="KEGG" id="dsy:DSY5054"/>
<dbReference type="eggNOG" id="COG0445">
    <property type="taxonomic scope" value="Bacteria"/>
</dbReference>
<dbReference type="HOGENOM" id="CLU_007831_2_2_9"/>
<dbReference type="Proteomes" id="UP000001946">
    <property type="component" value="Chromosome"/>
</dbReference>
<dbReference type="GO" id="GO:0005829">
    <property type="term" value="C:cytosol"/>
    <property type="evidence" value="ECO:0007669"/>
    <property type="project" value="TreeGrafter"/>
</dbReference>
<dbReference type="GO" id="GO:0050660">
    <property type="term" value="F:flavin adenine dinucleotide binding"/>
    <property type="evidence" value="ECO:0007669"/>
    <property type="project" value="UniProtKB-UniRule"/>
</dbReference>
<dbReference type="GO" id="GO:0030488">
    <property type="term" value="P:tRNA methylation"/>
    <property type="evidence" value="ECO:0007669"/>
    <property type="project" value="TreeGrafter"/>
</dbReference>
<dbReference type="GO" id="GO:0002098">
    <property type="term" value="P:tRNA wobble uridine modification"/>
    <property type="evidence" value="ECO:0007669"/>
    <property type="project" value="InterPro"/>
</dbReference>
<dbReference type="FunFam" id="1.10.150.570:FF:000001">
    <property type="entry name" value="tRNA uridine 5-carboxymethylaminomethyl modification enzyme MnmG"/>
    <property type="match status" value="1"/>
</dbReference>
<dbReference type="FunFam" id="3.50.50.60:FF:000002">
    <property type="entry name" value="tRNA uridine 5-carboxymethylaminomethyl modification enzyme MnmG"/>
    <property type="match status" value="1"/>
</dbReference>
<dbReference type="Gene3D" id="3.50.50.60">
    <property type="entry name" value="FAD/NAD(P)-binding domain"/>
    <property type="match status" value="2"/>
</dbReference>
<dbReference type="Gene3D" id="1.10.150.570">
    <property type="entry name" value="GidA associated domain, C-terminal subdomain"/>
    <property type="match status" value="1"/>
</dbReference>
<dbReference type="Gene3D" id="1.10.10.1800">
    <property type="entry name" value="tRNA uridine 5-carboxymethylaminomethyl modification enzyme MnmG/GidA"/>
    <property type="match status" value="1"/>
</dbReference>
<dbReference type="HAMAP" id="MF_00129">
    <property type="entry name" value="MnmG_GidA"/>
    <property type="match status" value="1"/>
</dbReference>
<dbReference type="InterPro" id="IPR036188">
    <property type="entry name" value="FAD/NAD-bd_sf"/>
</dbReference>
<dbReference type="InterPro" id="IPR049312">
    <property type="entry name" value="GIDA_C_N"/>
</dbReference>
<dbReference type="InterPro" id="IPR004416">
    <property type="entry name" value="MnmG"/>
</dbReference>
<dbReference type="InterPro" id="IPR002218">
    <property type="entry name" value="MnmG-rel"/>
</dbReference>
<dbReference type="InterPro" id="IPR020595">
    <property type="entry name" value="MnmG-rel_CS"/>
</dbReference>
<dbReference type="InterPro" id="IPR026904">
    <property type="entry name" value="MnmG_C"/>
</dbReference>
<dbReference type="InterPro" id="IPR047001">
    <property type="entry name" value="MnmG_C_subdom"/>
</dbReference>
<dbReference type="InterPro" id="IPR044920">
    <property type="entry name" value="MnmG_C_subdom_sf"/>
</dbReference>
<dbReference type="InterPro" id="IPR040131">
    <property type="entry name" value="MnmG_N"/>
</dbReference>
<dbReference type="NCBIfam" id="TIGR00136">
    <property type="entry name" value="mnmG_gidA"/>
    <property type="match status" value="1"/>
</dbReference>
<dbReference type="PANTHER" id="PTHR11806">
    <property type="entry name" value="GLUCOSE INHIBITED DIVISION PROTEIN A"/>
    <property type="match status" value="1"/>
</dbReference>
<dbReference type="PANTHER" id="PTHR11806:SF0">
    <property type="entry name" value="PROTEIN MTO1 HOMOLOG, MITOCHONDRIAL"/>
    <property type="match status" value="1"/>
</dbReference>
<dbReference type="Pfam" id="PF01134">
    <property type="entry name" value="GIDA"/>
    <property type="match status" value="1"/>
</dbReference>
<dbReference type="Pfam" id="PF21680">
    <property type="entry name" value="GIDA_C_1st"/>
    <property type="match status" value="1"/>
</dbReference>
<dbReference type="Pfam" id="PF13932">
    <property type="entry name" value="SAM_GIDA_C"/>
    <property type="match status" value="1"/>
</dbReference>
<dbReference type="SMART" id="SM01228">
    <property type="entry name" value="GIDA_assoc_3"/>
    <property type="match status" value="1"/>
</dbReference>
<dbReference type="SUPFAM" id="SSF51905">
    <property type="entry name" value="FAD/NAD(P)-binding domain"/>
    <property type="match status" value="1"/>
</dbReference>
<dbReference type="PROSITE" id="PS01280">
    <property type="entry name" value="GIDA_1"/>
    <property type="match status" value="1"/>
</dbReference>
<dbReference type="PROSITE" id="PS01281">
    <property type="entry name" value="GIDA_2"/>
    <property type="match status" value="1"/>
</dbReference>
<keyword id="KW-0963">Cytoplasm</keyword>
<keyword id="KW-0274">FAD</keyword>
<keyword id="KW-0285">Flavoprotein</keyword>
<keyword id="KW-0520">NAD</keyword>
<keyword id="KW-1185">Reference proteome</keyword>
<keyword id="KW-0819">tRNA processing</keyword>
<sequence length="637" mass="70439">MEYLAGNYDVIVVGAGHAGCEAALAAARMGGRTLLITLSLDNIAHMDCNPSLGGPAKGHLVREIDALGGQMGITADETSLQVRMLNTGKGPAVHALRIQSDKQAYHLHMRNAILGQENLVLHQALVERIKTEDGKVSGVVTRTGAFYAAPNVILTSGTYLRGRIIIGDAMYEGGPNGQQTAMNLSGALKELGLELGRFKTGTPPRIHRRSVDYTKFTVQPGDSVPWRYSFMPTQSMFWGRDVDKQIPCWLGYTTPETHQIIQDNIHRAPLYSGKIEGIGPRYCPSIEDKVVRFADRPTHQIFLEPEGWNSDELYVAGLSTSMPEEIQYDIIHSIPGLEKAELLRPGYAIEYDYVKPYQLSLSLEVRRIPGLFTAGQLNGTSGYEEAAAQGLLAGINAALRVQGKEPFIVRRSEGYLGVLIDDLVNKGVKEPYRLLTSRAEYRLILRQDNADLRLTPRGREVGLVKDERWAAFQKKKAAIAEINALWRGTTFSPLNEHLAEVLAGVHSAPVHGGISGEELMRRPEITINEIKQLIPQLAEYDEEALLEAGIEIKYAGYIEKQLAEIERFAKMEERMIPEEIVYDQIKGLSTEGRQRLKEVAPANMGQATRITGVTPADISVLLVYLEQKRRGGQIHAT</sequence>
<feature type="chain" id="PRO_0000345262" description="tRNA uridine 5-carboxymethylaminomethyl modification enzyme MnmG">
    <location>
        <begin position="1"/>
        <end position="637"/>
    </location>
</feature>
<feature type="binding site" evidence="1">
    <location>
        <begin position="14"/>
        <end position="19"/>
    </location>
    <ligand>
        <name>FAD</name>
        <dbReference type="ChEBI" id="CHEBI:57692"/>
    </ligand>
</feature>
<feature type="binding site" evidence="1">
    <location>
        <begin position="279"/>
        <end position="293"/>
    </location>
    <ligand>
        <name>NAD(+)</name>
        <dbReference type="ChEBI" id="CHEBI:57540"/>
    </ligand>
</feature>
<protein>
    <recommendedName>
        <fullName evidence="1">tRNA uridine 5-carboxymethylaminomethyl modification enzyme MnmG</fullName>
    </recommendedName>
    <alternativeName>
        <fullName evidence="1">Glucose-inhibited division protein A</fullName>
    </alternativeName>
</protein>